<organism>
    <name type="scientific">Aster yellows witches'-broom phytoplasma (strain AYWB)</name>
    <dbReference type="NCBI Taxonomy" id="322098"/>
    <lineage>
        <taxon>Bacteria</taxon>
        <taxon>Bacillati</taxon>
        <taxon>Mycoplasmatota</taxon>
        <taxon>Mollicutes</taxon>
        <taxon>Acholeplasmatales</taxon>
        <taxon>Acholeplasmataceae</taxon>
        <taxon>Candidatus Phytoplasma</taxon>
        <taxon>16SrI (Aster yellows group)</taxon>
    </lineage>
</organism>
<comment type="similarity">
    <text evidence="1">Belongs to the bacterial ribosomal protein bL34 family.</text>
</comment>
<protein>
    <recommendedName>
        <fullName evidence="1">Large ribosomal subunit protein bL34</fullName>
    </recommendedName>
    <alternativeName>
        <fullName evidence="2">50S ribosomal protein L34</fullName>
    </alternativeName>
</protein>
<reference key="1">
    <citation type="journal article" date="2006" name="J. Bacteriol.">
        <title>Living with genome instability: the adaptation of phytoplasmas to diverse environments of their insect and plant hosts.</title>
        <authorList>
            <person name="Bai X."/>
            <person name="Zhang J."/>
            <person name="Ewing A."/>
            <person name="Miller S.A."/>
            <person name="Jancso Radek A."/>
            <person name="Shevchenko D.V."/>
            <person name="Tsukerman K."/>
            <person name="Walunas T."/>
            <person name="Lapidus A."/>
            <person name="Campbell J.W."/>
            <person name="Hogenhout S.A."/>
        </authorList>
    </citation>
    <scope>NUCLEOTIDE SEQUENCE [LARGE SCALE GENOMIC DNA]</scope>
    <source>
        <strain>AYWB</strain>
    </source>
</reference>
<evidence type="ECO:0000255" key="1">
    <source>
        <dbReference type="HAMAP-Rule" id="MF_00391"/>
    </source>
</evidence>
<evidence type="ECO:0000305" key="2"/>
<gene>
    <name evidence="1" type="primary">rpmH</name>
    <name type="ordered locus">AYWB_474</name>
</gene>
<dbReference type="EMBL" id="CP000061">
    <property type="protein sequence ID" value="ABC65591.1"/>
    <property type="molecule type" value="Genomic_DNA"/>
</dbReference>
<dbReference type="RefSeq" id="WP_011412754.1">
    <property type="nucleotide sequence ID" value="NC_007716.1"/>
</dbReference>
<dbReference type="SMR" id="Q2NJ02"/>
<dbReference type="STRING" id="322098.AYWB_474"/>
<dbReference type="KEGG" id="ayw:AYWB_474"/>
<dbReference type="eggNOG" id="COG0230">
    <property type="taxonomic scope" value="Bacteria"/>
</dbReference>
<dbReference type="HOGENOM" id="CLU_129938_2_0_14"/>
<dbReference type="OrthoDB" id="9804164at2"/>
<dbReference type="PhylomeDB" id="Q2NJ02"/>
<dbReference type="Proteomes" id="UP000001934">
    <property type="component" value="Chromosome"/>
</dbReference>
<dbReference type="GO" id="GO:1990904">
    <property type="term" value="C:ribonucleoprotein complex"/>
    <property type="evidence" value="ECO:0007669"/>
    <property type="project" value="UniProtKB-KW"/>
</dbReference>
<dbReference type="GO" id="GO:0005840">
    <property type="term" value="C:ribosome"/>
    <property type="evidence" value="ECO:0007669"/>
    <property type="project" value="UniProtKB-KW"/>
</dbReference>
<dbReference type="GO" id="GO:0003735">
    <property type="term" value="F:structural constituent of ribosome"/>
    <property type="evidence" value="ECO:0007669"/>
    <property type="project" value="InterPro"/>
</dbReference>
<dbReference type="GO" id="GO:0006412">
    <property type="term" value="P:translation"/>
    <property type="evidence" value="ECO:0007669"/>
    <property type="project" value="UniProtKB-UniRule"/>
</dbReference>
<dbReference type="FunFam" id="1.10.287.3980:FF:000001">
    <property type="entry name" value="Mitochondrial ribosomal protein L34"/>
    <property type="match status" value="1"/>
</dbReference>
<dbReference type="Gene3D" id="1.10.287.3980">
    <property type="match status" value="1"/>
</dbReference>
<dbReference type="HAMAP" id="MF_00391">
    <property type="entry name" value="Ribosomal_bL34"/>
    <property type="match status" value="1"/>
</dbReference>
<dbReference type="InterPro" id="IPR000271">
    <property type="entry name" value="Ribosomal_bL34"/>
</dbReference>
<dbReference type="InterPro" id="IPR020939">
    <property type="entry name" value="Ribosomal_bL34_CS"/>
</dbReference>
<dbReference type="NCBIfam" id="TIGR01030">
    <property type="entry name" value="rpmH_bact"/>
    <property type="match status" value="1"/>
</dbReference>
<dbReference type="PANTHER" id="PTHR14503:SF4">
    <property type="entry name" value="LARGE RIBOSOMAL SUBUNIT PROTEIN BL34M"/>
    <property type="match status" value="1"/>
</dbReference>
<dbReference type="PANTHER" id="PTHR14503">
    <property type="entry name" value="MITOCHONDRIAL RIBOSOMAL PROTEIN 34 FAMILY MEMBER"/>
    <property type="match status" value="1"/>
</dbReference>
<dbReference type="Pfam" id="PF00468">
    <property type="entry name" value="Ribosomal_L34"/>
    <property type="match status" value="1"/>
</dbReference>
<dbReference type="PROSITE" id="PS00784">
    <property type="entry name" value="RIBOSOMAL_L34"/>
    <property type="match status" value="1"/>
</dbReference>
<sequence>MKRTYQPSKIKRKRTHGFRARMSTVGGCKVLARRRAKGRLQITV</sequence>
<keyword id="KW-0687">Ribonucleoprotein</keyword>
<keyword id="KW-0689">Ribosomal protein</keyword>
<accession>Q2NJ02</accession>
<feature type="chain" id="PRO_1000013275" description="Large ribosomal subunit protein bL34">
    <location>
        <begin position="1"/>
        <end position="44"/>
    </location>
</feature>
<name>RL34_AYWBP</name>
<proteinExistence type="inferred from homology"/>